<dbReference type="EMBL" id="CP001233">
    <property type="protein sequence ID" value="ACP06730.1"/>
    <property type="molecule type" value="Genomic_DNA"/>
</dbReference>
<dbReference type="RefSeq" id="WP_000032502.1">
    <property type="nucleotide sequence ID" value="NC_012578.1"/>
</dbReference>
<dbReference type="SMR" id="C3LR52"/>
<dbReference type="GeneID" id="89513508"/>
<dbReference type="KEGG" id="vcm:VCM66_2433"/>
<dbReference type="HOGENOM" id="CLU_128576_0_0_6"/>
<dbReference type="Proteomes" id="UP000001217">
    <property type="component" value="Chromosome I"/>
</dbReference>
<dbReference type="GO" id="GO:0009347">
    <property type="term" value="C:aspartate carbamoyltransferase complex"/>
    <property type="evidence" value="ECO:0007669"/>
    <property type="project" value="InterPro"/>
</dbReference>
<dbReference type="GO" id="GO:0046872">
    <property type="term" value="F:metal ion binding"/>
    <property type="evidence" value="ECO:0007669"/>
    <property type="project" value="UniProtKB-KW"/>
</dbReference>
<dbReference type="GO" id="GO:0006207">
    <property type="term" value="P:'de novo' pyrimidine nucleobase biosynthetic process"/>
    <property type="evidence" value="ECO:0007669"/>
    <property type="project" value="InterPro"/>
</dbReference>
<dbReference type="GO" id="GO:0006221">
    <property type="term" value="P:pyrimidine nucleotide biosynthetic process"/>
    <property type="evidence" value="ECO:0007669"/>
    <property type="project" value="UniProtKB-UniRule"/>
</dbReference>
<dbReference type="Gene3D" id="2.30.30.20">
    <property type="entry name" value="Aspartate carbamoyltransferase regulatory subunit, C-terminal domain"/>
    <property type="match status" value="1"/>
</dbReference>
<dbReference type="Gene3D" id="3.30.70.140">
    <property type="entry name" value="Aspartate carbamoyltransferase regulatory subunit, N-terminal domain"/>
    <property type="match status" value="1"/>
</dbReference>
<dbReference type="HAMAP" id="MF_00002">
    <property type="entry name" value="Asp_carb_tr_reg"/>
    <property type="match status" value="1"/>
</dbReference>
<dbReference type="InterPro" id="IPR020545">
    <property type="entry name" value="Asp_carbamoyltransf_reg_N"/>
</dbReference>
<dbReference type="InterPro" id="IPR002801">
    <property type="entry name" value="Asp_carbamoylTrfase_reg"/>
</dbReference>
<dbReference type="InterPro" id="IPR020542">
    <property type="entry name" value="Asp_carbamoyltrfase_reg_C"/>
</dbReference>
<dbReference type="InterPro" id="IPR036792">
    <property type="entry name" value="Asp_carbatrfase_reg_C_sf"/>
</dbReference>
<dbReference type="InterPro" id="IPR036793">
    <property type="entry name" value="Asp_carbatrfase_reg_N_sf"/>
</dbReference>
<dbReference type="NCBIfam" id="TIGR00240">
    <property type="entry name" value="ATCase_reg"/>
    <property type="match status" value="1"/>
</dbReference>
<dbReference type="PANTHER" id="PTHR35805">
    <property type="entry name" value="ASPARTATE CARBAMOYLTRANSFERASE REGULATORY CHAIN"/>
    <property type="match status" value="1"/>
</dbReference>
<dbReference type="PANTHER" id="PTHR35805:SF1">
    <property type="entry name" value="ASPARTATE CARBAMOYLTRANSFERASE REGULATORY CHAIN"/>
    <property type="match status" value="1"/>
</dbReference>
<dbReference type="Pfam" id="PF01948">
    <property type="entry name" value="PyrI"/>
    <property type="match status" value="1"/>
</dbReference>
<dbReference type="Pfam" id="PF02748">
    <property type="entry name" value="PyrI_C"/>
    <property type="match status" value="1"/>
</dbReference>
<dbReference type="SUPFAM" id="SSF57825">
    <property type="entry name" value="Aspartate carbamoyltransferase, Regulatory-chain, C-terminal domain"/>
    <property type="match status" value="1"/>
</dbReference>
<dbReference type="SUPFAM" id="SSF54893">
    <property type="entry name" value="Aspartate carbamoyltransferase, Regulatory-chain, N-terminal domain"/>
    <property type="match status" value="1"/>
</dbReference>
<sequence length="155" mass="17276">MSKETKLQVEAIKNGTVIDHIPAKVGIKVLKLFDMHNSAQRVTIGLNLPSSALGSKDLLKIENVFISEAQANKLALYAPHATVNQIENYEVVKKLALQLPERINNVFACPNSNCISHNEPVESSFKLSEKNNDIRLKCKYCEKVFARDVVTEIEA</sequence>
<gene>
    <name evidence="1" type="primary">pyrI</name>
    <name type="ordered locus">VCM66_2433</name>
</gene>
<evidence type="ECO:0000255" key="1">
    <source>
        <dbReference type="HAMAP-Rule" id="MF_00002"/>
    </source>
</evidence>
<name>PYRI_VIBCM</name>
<protein>
    <recommendedName>
        <fullName evidence="1">Aspartate carbamoyltransferase regulatory chain</fullName>
    </recommendedName>
</protein>
<proteinExistence type="inferred from homology"/>
<feature type="chain" id="PRO_1000193116" description="Aspartate carbamoyltransferase regulatory chain">
    <location>
        <begin position="1"/>
        <end position="155"/>
    </location>
</feature>
<feature type="binding site" evidence="1">
    <location>
        <position position="109"/>
    </location>
    <ligand>
        <name>Zn(2+)</name>
        <dbReference type="ChEBI" id="CHEBI:29105"/>
    </ligand>
</feature>
<feature type="binding site" evidence="1">
    <location>
        <position position="114"/>
    </location>
    <ligand>
        <name>Zn(2+)</name>
        <dbReference type="ChEBI" id="CHEBI:29105"/>
    </ligand>
</feature>
<feature type="binding site" evidence="1">
    <location>
        <position position="138"/>
    </location>
    <ligand>
        <name>Zn(2+)</name>
        <dbReference type="ChEBI" id="CHEBI:29105"/>
    </ligand>
</feature>
<feature type="binding site" evidence="1">
    <location>
        <position position="141"/>
    </location>
    <ligand>
        <name>Zn(2+)</name>
        <dbReference type="ChEBI" id="CHEBI:29105"/>
    </ligand>
</feature>
<comment type="function">
    <text evidence="1">Involved in allosteric regulation of aspartate carbamoyltransferase.</text>
</comment>
<comment type="cofactor">
    <cofactor evidence="1">
        <name>Zn(2+)</name>
        <dbReference type="ChEBI" id="CHEBI:29105"/>
    </cofactor>
    <text evidence="1">Binds 1 zinc ion per subunit.</text>
</comment>
<comment type="subunit">
    <text evidence="1">Contains catalytic and regulatory chains.</text>
</comment>
<comment type="similarity">
    <text evidence="1">Belongs to the PyrI family.</text>
</comment>
<organism>
    <name type="scientific">Vibrio cholerae serotype O1 (strain M66-2)</name>
    <dbReference type="NCBI Taxonomy" id="579112"/>
    <lineage>
        <taxon>Bacteria</taxon>
        <taxon>Pseudomonadati</taxon>
        <taxon>Pseudomonadota</taxon>
        <taxon>Gammaproteobacteria</taxon>
        <taxon>Vibrionales</taxon>
        <taxon>Vibrionaceae</taxon>
        <taxon>Vibrio</taxon>
    </lineage>
</organism>
<reference key="1">
    <citation type="journal article" date="2008" name="PLoS ONE">
        <title>A recalibrated molecular clock and independent origins for the cholera pandemic clones.</title>
        <authorList>
            <person name="Feng L."/>
            <person name="Reeves P.R."/>
            <person name="Lan R."/>
            <person name="Ren Y."/>
            <person name="Gao C."/>
            <person name="Zhou Z."/>
            <person name="Ren Y."/>
            <person name="Cheng J."/>
            <person name="Wang W."/>
            <person name="Wang J."/>
            <person name="Qian W."/>
            <person name="Li D."/>
            <person name="Wang L."/>
        </authorList>
    </citation>
    <scope>NUCLEOTIDE SEQUENCE [LARGE SCALE GENOMIC DNA]</scope>
    <source>
        <strain>M66-2</strain>
    </source>
</reference>
<keyword id="KW-0479">Metal-binding</keyword>
<keyword id="KW-0665">Pyrimidine biosynthesis</keyword>
<keyword id="KW-0862">Zinc</keyword>
<accession>C3LR52</accession>